<evidence type="ECO:0000250" key="1">
    <source>
        <dbReference type="UniProtKB" id="Q3U1Z5"/>
    </source>
</evidence>
<evidence type="ECO:0000255" key="2">
    <source>
        <dbReference type="PROSITE-ProRule" id="PRU00097"/>
    </source>
</evidence>
<evidence type="ECO:0000256" key="3">
    <source>
        <dbReference type="SAM" id="MobiDB-lite"/>
    </source>
</evidence>
<evidence type="ECO:0000269" key="4">
    <source>
    </source>
</evidence>
<evidence type="ECO:0000269" key="5">
    <source>
    </source>
</evidence>
<evidence type="ECO:0000305" key="6"/>
<evidence type="ECO:0007744" key="7">
    <source>
    </source>
</evidence>
<evidence type="ECO:0007744" key="8">
    <source>
    </source>
</evidence>
<name>GPSM3_HUMAN</name>
<proteinExistence type="evidence at protein level"/>
<keyword id="KW-0963">Cytoplasm</keyword>
<keyword id="KW-0597">Phosphoprotein</keyword>
<keyword id="KW-1267">Proteomics identification</keyword>
<keyword id="KW-1185">Reference proteome</keyword>
<keyword id="KW-0677">Repeat</keyword>
<gene>
    <name type="primary">GPSM3</name>
    <name type="synonym">AGS4</name>
    <name type="synonym">C6orf9</name>
    <name type="synonym">G18</name>
</gene>
<sequence>MEAERPQEEEDGEQGPPQDEEGWPPPNSTTRPWRSAPPSPPPPGTRHTALGPRSASLLSLQTELLLDLVAEAQSRRLEEQRATFYTPQNPSSLAPAPLRPLEDREQLYSTILSHQCQRMEAQRSEPPLPPGGQELLELLLRVQGGGRMEEQRSRPPTHTC</sequence>
<feature type="chain" id="PRO_0000233717" description="G-protein-signaling modulator 3">
    <location>
        <begin position="1"/>
        <end position="160"/>
    </location>
</feature>
<feature type="domain" description="GoLoco 1" evidence="2">
    <location>
        <begin position="62"/>
        <end position="84"/>
    </location>
</feature>
<feature type="domain" description="GoLoco 2" evidence="2">
    <location>
        <begin position="104"/>
        <end position="126"/>
    </location>
</feature>
<feature type="domain" description="GoLoco 3" evidence="2">
    <location>
        <begin position="132"/>
        <end position="155"/>
    </location>
</feature>
<feature type="region of interest" description="Disordered" evidence="3">
    <location>
        <begin position="1"/>
        <end position="55"/>
    </location>
</feature>
<feature type="compositionally biased region" description="Acidic residues" evidence="3">
    <location>
        <begin position="7"/>
        <end position="22"/>
    </location>
</feature>
<feature type="compositionally biased region" description="Pro residues" evidence="3">
    <location>
        <begin position="35"/>
        <end position="44"/>
    </location>
</feature>
<feature type="modified residue" description="Phosphoserine" evidence="7 8">
    <location>
        <position position="35"/>
    </location>
</feature>
<feature type="modified residue" description="Phosphoserine" evidence="7 8">
    <location>
        <position position="39"/>
    </location>
</feature>
<feature type="modified residue" description="Phosphoserine" evidence="1">
    <location>
        <position position="56"/>
    </location>
</feature>
<feature type="modified residue" description="Phosphoserine" evidence="8">
    <location>
        <position position="59"/>
    </location>
</feature>
<feature type="modified residue" description="Phosphothreonine" evidence="8">
    <location>
        <position position="62"/>
    </location>
</feature>
<feature type="mutagenesis site" description="Restores G(i) alpha binding and GDI activity of the GoLoco 2 domain." evidence="4">
    <original>A</original>
    <variation>D</variation>
    <location>
        <position position="121"/>
    </location>
</feature>
<feature type="sequence conflict" description="In Ref. 1." evidence="6" ref="1">
    <original>Q</original>
    <variation>R</variation>
    <location>
        <position position="14"/>
    </location>
</feature>
<accession>Q9Y4H4</accession>
<accession>A2BFJ3</accession>
<protein>
    <recommendedName>
        <fullName>G-protein-signaling modulator 3</fullName>
    </recommendedName>
    <alternativeName>
        <fullName>Activator of G-protein signaling 4</fullName>
    </alternativeName>
    <alternativeName>
        <fullName>G18.1b</fullName>
    </alternativeName>
    <alternativeName>
        <fullName>Protein G18</fullName>
    </alternativeName>
</protein>
<comment type="function">
    <text evidence="4 5">Interacts with subunit of G(i) alpha proteins and regulates the activation of G(i) alpha proteins.</text>
</comment>
<comment type="interaction">
    <interactant intactId="EBI-347538">
        <id>Q9Y4H4</id>
    </interactant>
    <interactant intactId="EBI-12809094">
        <id>Q8TDX5-2</id>
        <label>ACMSD</label>
    </interactant>
    <organismsDiffer>false</organismsDiffer>
    <experiments>3</experiments>
</comment>
<comment type="interaction">
    <interactant intactId="EBI-347538">
        <id>Q9Y4H4</id>
    </interactant>
    <interactant intactId="EBI-16746154">
        <id>Q7Z3H0-1</id>
        <label>ANKRD33</label>
    </interactant>
    <organismsDiffer>false</organismsDiffer>
    <experiments>5</experiments>
</comment>
<comment type="interaction">
    <interactant intactId="EBI-347538">
        <id>Q9Y4H4</id>
    </interactant>
    <interactant intactId="EBI-12809012">
        <id>Q8WXK1</id>
        <label>ASB15</label>
    </interactant>
    <organismsDiffer>false</organismsDiffer>
    <experiments>3</experiments>
</comment>
<comment type="interaction">
    <interactant intactId="EBI-347538">
        <id>Q9Y4H4</id>
    </interactant>
    <interactant intactId="EBI-742695">
        <id>Q8N1L9</id>
        <label>BATF2</label>
    </interactant>
    <organismsDiffer>false</organismsDiffer>
    <experiments>3</experiments>
</comment>
<comment type="interaction">
    <interactant intactId="EBI-347538">
        <id>Q9Y4H4</id>
    </interactant>
    <interactant intactId="EBI-3919268">
        <id>Q96LC9</id>
        <label>BMF</label>
    </interactant>
    <organismsDiffer>false</organismsDiffer>
    <experiments>3</experiments>
</comment>
<comment type="interaction">
    <interactant intactId="EBI-347538">
        <id>Q9Y4H4</id>
    </interactant>
    <interactant intactId="EBI-18101667">
        <id>Q5W0N0-2</id>
        <label>C9orf57</label>
    </interactant>
    <organismsDiffer>false</organismsDiffer>
    <experiments>3</experiments>
</comment>
<comment type="interaction">
    <interactant intactId="EBI-347538">
        <id>Q9Y4H4</id>
    </interactant>
    <interactant intactId="EBI-12593838">
        <id>Q6WN34-2</id>
        <label>CHRDL2</label>
    </interactant>
    <organismsDiffer>false</organismsDiffer>
    <experiments>3</experiments>
</comment>
<comment type="interaction">
    <interactant intactId="EBI-347538">
        <id>Q9Y4H4</id>
    </interactant>
    <interactant intactId="EBI-6269632">
        <id>Q96BR5</id>
        <label>COA7</label>
    </interactant>
    <organismsDiffer>false</organismsDiffer>
    <experiments>3</experiments>
</comment>
<comment type="interaction">
    <interactant intactId="EBI-347538">
        <id>Q9Y4H4</id>
    </interactant>
    <interactant intactId="EBI-1188472">
        <id>P78358</id>
        <label>CTAG1B</label>
    </interactant>
    <organismsDiffer>false</organismsDiffer>
    <experiments>5</experiments>
</comment>
<comment type="interaction">
    <interactant intactId="EBI-347538">
        <id>Q9Y4H4</id>
    </interactant>
    <interactant intactId="EBI-750300">
        <id>Q01658</id>
        <label>DR1</label>
    </interactant>
    <organismsDiffer>false</organismsDiffer>
    <experiments>3</experiments>
</comment>
<comment type="interaction">
    <interactant intactId="EBI-347538">
        <id>Q9Y4H4</id>
    </interactant>
    <interactant intactId="EBI-12845222">
        <id>Q9NVL1-2</id>
        <label>FAM86C1P</label>
    </interactant>
    <organismsDiffer>false</organismsDiffer>
    <experiments>5</experiments>
</comment>
<comment type="interaction">
    <interactant intactId="EBI-347538">
        <id>Q9Y4H4</id>
    </interactant>
    <interactant intactId="EBI-9641086">
        <id>P21333-2</id>
        <label>FLNA</label>
    </interactant>
    <organismsDiffer>false</organismsDiffer>
    <experiments>3</experiments>
</comment>
<comment type="interaction">
    <interactant intactId="EBI-347538">
        <id>Q9Y4H4</id>
    </interactant>
    <interactant intactId="EBI-923440">
        <id>Q8WXI9</id>
        <label>GATAD2B</label>
    </interactant>
    <organismsDiffer>false</organismsDiffer>
    <experiments>3</experiments>
</comment>
<comment type="interaction">
    <interactant intactId="EBI-347538">
        <id>Q9Y4H4</id>
    </interactant>
    <interactant intactId="EBI-618639">
        <id>P63096</id>
        <label>GNAI1</label>
    </interactant>
    <organismsDiffer>false</organismsDiffer>
    <experiments>10</experiments>
</comment>
<comment type="interaction">
    <interactant intactId="EBI-347538">
        <id>Q9Y4H4</id>
    </interactant>
    <interactant intactId="EBI-353997">
        <id>P04899</id>
        <label>GNAI2</label>
    </interactant>
    <organismsDiffer>false</organismsDiffer>
    <experiments>3</experiments>
</comment>
<comment type="interaction">
    <interactant intactId="EBI-347538">
        <id>Q9Y4H4</id>
    </interactant>
    <interactant intactId="EBI-357563">
        <id>P08754</id>
        <label>GNAI3</label>
    </interactant>
    <organismsDiffer>false</organismsDiffer>
    <experiments>8</experiments>
</comment>
<comment type="interaction">
    <interactant intactId="EBI-347538">
        <id>Q9Y4H4</id>
    </interactant>
    <interactant intactId="EBI-747754">
        <id>P28799</id>
        <label>GRN</label>
    </interactant>
    <organismsDiffer>false</organismsDiffer>
    <experiments>3</experiments>
</comment>
<comment type="interaction">
    <interactant intactId="EBI-347538">
        <id>Q9Y4H4</id>
    </interactant>
    <interactant intactId="EBI-1054873">
        <id>Q9Y5Q9</id>
        <label>GTF3C3</label>
    </interactant>
    <organismsDiffer>false</organismsDiffer>
    <experiments>3</experiments>
</comment>
<comment type="interaction">
    <interactant intactId="EBI-347538">
        <id>Q9Y4H4</id>
    </interactant>
    <interactant intactId="EBI-12057631">
        <id>A0A087WSW0</id>
        <label>HELT</label>
    </interactant>
    <organismsDiffer>false</organismsDiffer>
    <experiments>3</experiments>
</comment>
<comment type="interaction">
    <interactant intactId="EBI-347538">
        <id>Q9Y4H4</id>
    </interactant>
    <interactant intactId="EBI-12881610">
        <id>Q4VC39</id>
        <label>HIGD2B</label>
    </interactant>
    <organismsDiffer>false</organismsDiffer>
    <experiments>3</experiments>
</comment>
<comment type="interaction">
    <interactant intactId="EBI-347538">
        <id>Q9Y4H4</id>
    </interactant>
    <interactant intactId="EBI-7116203">
        <id>O75031</id>
        <label>HSF2BP</label>
    </interactant>
    <organismsDiffer>false</organismsDiffer>
    <experiments>3</experiments>
</comment>
<comment type="interaction">
    <interactant intactId="EBI-347538">
        <id>Q9Y4H4</id>
    </interactant>
    <interactant intactId="EBI-352682">
        <id>P04792</id>
        <label>HSPB1</label>
    </interactant>
    <organismsDiffer>false</organismsDiffer>
    <experiments>3</experiments>
</comment>
<comment type="interaction">
    <interactant intactId="EBI-347538">
        <id>Q9Y4H4</id>
    </interactant>
    <interactant intactId="EBI-3893098">
        <id>Q6IPM2</id>
        <label>IQCE</label>
    </interactant>
    <organismsDiffer>false</organismsDiffer>
    <experiments>3</experiments>
</comment>
<comment type="interaction">
    <interactant intactId="EBI-347538">
        <id>Q9Y4H4</id>
    </interactant>
    <interactant intactId="EBI-2866408">
        <id>P26440</id>
        <label>IVD</label>
    </interactant>
    <organismsDiffer>false</organismsDiffer>
    <experiments>3</experiments>
</comment>
<comment type="interaction">
    <interactant intactId="EBI-347538">
        <id>Q9Y4H4</id>
    </interactant>
    <interactant intactId="EBI-12810853">
        <id>Q8TAV5</id>
        <label>KCNJ5-AS1</label>
    </interactant>
    <organismsDiffer>false</organismsDiffer>
    <experiments>3</experiments>
</comment>
<comment type="interaction">
    <interactant intactId="EBI-347538">
        <id>Q9Y4H4</id>
    </interactant>
    <interactant intactId="EBI-10975473">
        <id>O60333-2</id>
        <label>KIF1B</label>
    </interactant>
    <organismsDiffer>false</organismsDiffer>
    <experiments>3</experiments>
</comment>
<comment type="interaction">
    <interactant intactId="EBI-347538">
        <id>Q9Y4H4</id>
    </interactant>
    <interactant intactId="EBI-1052037">
        <id>Q8IUC1</id>
        <label>KRTAP11-1</label>
    </interactant>
    <organismsDiffer>false</organismsDiffer>
    <experiments>3</experiments>
</comment>
<comment type="interaction">
    <interactant intactId="EBI-347538">
        <id>Q9Y4H4</id>
    </interactant>
    <interactant intactId="EBI-10241252">
        <id>Q3SY46</id>
        <label>KRTAP13-3</label>
    </interactant>
    <organismsDiffer>false</organismsDiffer>
    <experiments>3</experiments>
</comment>
<comment type="interaction">
    <interactant intactId="EBI-347538">
        <id>Q9Y4H4</id>
    </interactant>
    <interactant intactId="EBI-12958461">
        <id>Q3LI73</id>
        <label>KRTAP19-4</label>
    </interactant>
    <organismsDiffer>false</organismsDiffer>
    <experiments>3</experiments>
</comment>
<comment type="interaction">
    <interactant intactId="EBI-347538">
        <id>Q9Y4H4</id>
    </interactant>
    <interactant intactId="EBI-12516603">
        <id>Q8WWY6</id>
        <label>MBD3L1</label>
    </interactant>
    <organismsDiffer>false</organismsDiffer>
    <experiments>3</experiments>
</comment>
<comment type="interaction">
    <interactant intactId="EBI-347538">
        <id>Q9Y4H4</id>
    </interactant>
    <interactant intactId="EBI-748397">
        <id>P50222</id>
        <label>MEOX2</label>
    </interactant>
    <organismsDiffer>false</organismsDiffer>
    <experiments>3</experiments>
</comment>
<comment type="interaction">
    <interactant intactId="EBI-347538">
        <id>Q9Y4H4</id>
    </interactant>
    <interactant intactId="EBI-3910729">
        <id>Q15466</id>
        <label>NR0B2</label>
    </interactant>
    <organismsDiffer>false</organismsDiffer>
    <experiments>3</experiments>
</comment>
<comment type="interaction">
    <interactant intactId="EBI-347538">
        <id>Q9Y4H4</id>
    </interactant>
    <interactant intactId="EBI-10181968">
        <id>Q7Z4N8</id>
        <label>P4HA3</label>
    </interactant>
    <organismsDiffer>false</organismsDiffer>
    <experiments>3</experiments>
</comment>
<comment type="interaction">
    <interactant intactId="EBI-347538">
        <id>Q9Y4H4</id>
    </interactant>
    <interactant intactId="EBI-473160">
        <id>Q8N2W9</id>
        <label>PIAS4</label>
    </interactant>
    <organismsDiffer>false</organismsDiffer>
    <experiments>3</experiments>
</comment>
<comment type="interaction">
    <interactant intactId="EBI-347538">
        <id>Q9Y4H4</id>
    </interactant>
    <interactant intactId="EBI-12944296">
        <id>P85299-2</id>
        <label>PRR5</label>
    </interactant>
    <organismsDiffer>false</organismsDiffer>
    <experiments>3</experiments>
</comment>
<comment type="interaction">
    <interactant intactId="EBI-347538">
        <id>Q9Y4H4</id>
    </interactant>
    <interactant intactId="EBI-12854608">
        <id>P57078-2</id>
        <label>RIPK4</label>
    </interactant>
    <organismsDiffer>false</organismsDiffer>
    <experiments>3</experiments>
</comment>
<comment type="interaction">
    <interactant intactId="EBI-347538">
        <id>Q9Y4H4</id>
    </interactant>
    <interactant intactId="EBI-396669">
        <id>Q9Y3C5</id>
        <label>RNF11</label>
    </interactant>
    <organismsDiffer>false</organismsDiffer>
    <experiments>3</experiments>
</comment>
<comment type="interaction">
    <interactant intactId="EBI-347538">
        <id>Q9Y4H4</id>
    </interactant>
    <interactant intactId="EBI-12821217">
        <id>Q2I0M5</id>
        <label>RSPO4</label>
    </interactant>
    <organismsDiffer>false</organismsDiffer>
    <experiments>3</experiments>
</comment>
<comment type="interaction">
    <interactant intactId="EBI-347538">
        <id>Q9Y4H4</id>
    </interactant>
    <interactant intactId="EBI-990792">
        <id>P00441</id>
        <label>SOD1</label>
    </interactant>
    <organismsDiffer>false</organismsDiffer>
    <experiments>3</experiments>
</comment>
<comment type="interaction">
    <interactant intactId="EBI-347538">
        <id>Q9Y4H4</id>
    </interactant>
    <interactant intactId="EBI-11959123">
        <id>Q99932-2</id>
        <label>SPAG8</label>
    </interactant>
    <organismsDiffer>false</organismsDiffer>
    <experiments>3</experiments>
</comment>
<comment type="interaction">
    <interactant intactId="EBI-347538">
        <id>Q9Y4H4</id>
    </interactant>
    <interactant intactId="EBI-12831628">
        <id>Q8WW14-2</id>
        <label>SPMIP5</label>
    </interactant>
    <organismsDiffer>false</organismsDiffer>
    <experiments>3</experiments>
</comment>
<comment type="interaction">
    <interactant intactId="EBI-347538">
        <id>Q9Y4H4</id>
    </interactant>
    <interactant intactId="EBI-12290641">
        <id>O43610</id>
        <label>SPRY3</label>
    </interactant>
    <organismsDiffer>false</organismsDiffer>
    <experiments>3</experiments>
</comment>
<comment type="interaction">
    <interactant intactId="EBI-347538">
        <id>Q9Y4H4</id>
    </interactant>
    <interactant intactId="EBI-11294039">
        <id>Q9Y2K9</id>
        <label>STXBP5L</label>
    </interactant>
    <organismsDiffer>false</organismsDiffer>
    <experiments>3</experiments>
</comment>
<comment type="interaction">
    <interactant intactId="EBI-347538">
        <id>Q9Y4H4</id>
    </interactant>
    <interactant intactId="EBI-742268">
        <id>O75478</id>
        <label>TADA2A</label>
    </interactant>
    <organismsDiffer>false</organismsDiffer>
    <experiments>3</experiments>
</comment>
<comment type="interaction">
    <interactant intactId="EBI-347538">
        <id>Q9Y4H4</id>
    </interactant>
    <interactant intactId="EBI-372899">
        <id>Q13148</id>
        <label>TARDBP</label>
    </interactant>
    <organismsDiffer>false</organismsDiffer>
    <experiments>6</experiments>
</comment>
<comment type="interaction">
    <interactant intactId="EBI-347538">
        <id>Q9Y4H4</id>
    </interactant>
    <interactant intactId="EBI-11523345">
        <id>Q8IYF3-3</id>
        <label>TEX11</label>
    </interactant>
    <organismsDiffer>false</organismsDiffer>
    <experiments>3</experiments>
</comment>
<comment type="interaction">
    <interactant intactId="EBI-347538">
        <id>Q9Y4H4</id>
    </interactant>
    <interactant intactId="EBI-12068150">
        <id>Q6NVU6</id>
        <label>UFSP1</label>
    </interactant>
    <organismsDiffer>false</organismsDiffer>
    <experiments>3</experiments>
</comment>
<comment type="interaction">
    <interactant intactId="EBI-347538">
        <id>Q9Y4H4</id>
    </interactant>
    <interactant intactId="EBI-739895">
        <id>Q8N6Y0</id>
        <label>USHBP1</label>
    </interactant>
    <organismsDiffer>false</organismsDiffer>
    <experiments>3</experiments>
</comment>
<comment type="interaction">
    <interactant intactId="EBI-347538">
        <id>Q9Y4H4</id>
    </interactant>
    <interactant intactId="EBI-720609">
        <id>O76024</id>
        <label>WFS1</label>
    </interactant>
    <organismsDiffer>false</organismsDiffer>
    <experiments>3</experiments>
</comment>
<comment type="interaction">
    <interactant intactId="EBI-347538">
        <id>Q9Y4H4</id>
    </interactant>
    <interactant intactId="EBI-347088">
        <id>P63104</id>
        <label>YWHAZ</label>
    </interactant>
    <organismsDiffer>false</organismsDiffer>
    <experiments>7</experiments>
</comment>
<comment type="interaction">
    <interactant intactId="EBI-347538">
        <id>Q9Y4H4</id>
    </interactant>
    <interactant intactId="EBI-717634">
        <id>P17024</id>
        <label>ZNF20</label>
    </interactant>
    <organismsDiffer>false</organismsDiffer>
    <experiments>3</experiments>
</comment>
<comment type="interaction">
    <interactant intactId="EBI-347538">
        <id>Q9Y4H4</id>
    </interactant>
    <interactant intactId="EBI-745520">
        <id>Q9P0T4</id>
        <label>ZNF581</label>
    </interactant>
    <organismsDiffer>false</organismsDiffer>
    <experiments>3</experiments>
</comment>
<comment type="subcellular location">
    <subcellularLocation>
        <location evidence="5">Cytoplasm</location>
    </subcellularLocation>
</comment>
<comment type="tissue specificity">
    <text evidence="5">Expressed in heart, placenta, lung and liver.</text>
</comment>
<comment type="domain">
    <text evidence="4">The GoLoco 1 and/or GoLoco 3 domains exhibit GDI activity towards GDP-bound G(i) alpha protein, but not the GoLoco 2 domain.</text>
</comment>
<reference key="1">
    <citation type="journal article" date="2004" name="J. Biol. Chem.">
        <title>Identification and characterization of AGS4: a protein containing three G-protein regulatory motifs that regulate the activation state of Gialpha.</title>
        <authorList>
            <person name="Cao X."/>
            <person name="Cismowski M.J."/>
            <person name="Sato M."/>
            <person name="Blumer J.B."/>
            <person name="Lanier S.M."/>
        </authorList>
    </citation>
    <scope>NUCLEOTIDE SEQUENCE [MRNA]</scope>
    <scope>FUNCTION</scope>
    <scope>SUBCELLULAR LOCATION</scope>
    <scope>TISSUE SPECIFICITY</scope>
    <source>
        <tissue>Lung</tissue>
    </source>
</reference>
<reference key="2">
    <citation type="submission" date="1999-07" db="EMBL/GenBank/DDBJ databases">
        <title>Characterisation of the novel gene G18, located in the class III region of the human major histocompatibility complex.</title>
        <authorList>
            <person name="Kendall E."/>
            <person name="Campbell R.D."/>
        </authorList>
    </citation>
    <scope>NUCLEOTIDE SEQUENCE [MRNA]</scope>
</reference>
<reference key="3">
    <citation type="submission" date="2000-05" db="EMBL/GenBank/DDBJ databases">
        <title>A novel gene expressed in human adrenal gland.</title>
        <authorList>
            <person name="Li Y."/>
            <person name="Fu S."/>
            <person name="Huang C."/>
            <person name="Jiang C."/>
            <person name="Ren S."/>
            <person name="Zhou J."/>
            <person name="Yu Y."/>
            <person name="Xu S."/>
            <person name="Wang Y."/>
            <person name="Fu G."/>
            <person name="Chen Z."/>
            <person name="Han Z."/>
        </authorList>
    </citation>
    <scope>NUCLEOTIDE SEQUENCE [LARGE SCALE MRNA]</scope>
    <source>
        <tissue>Adrenal gland</tissue>
    </source>
</reference>
<reference key="4">
    <citation type="journal article" date="2004" name="Nat. Genet.">
        <title>Complete sequencing and characterization of 21,243 full-length human cDNAs.</title>
        <authorList>
            <person name="Ota T."/>
            <person name="Suzuki Y."/>
            <person name="Nishikawa T."/>
            <person name="Otsuki T."/>
            <person name="Sugiyama T."/>
            <person name="Irie R."/>
            <person name="Wakamatsu A."/>
            <person name="Hayashi K."/>
            <person name="Sato H."/>
            <person name="Nagai K."/>
            <person name="Kimura K."/>
            <person name="Makita H."/>
            <person name="Sekine M."/>
            <person name="Obayashi M."/>
            <person name="Nishi T."/>
            <person name="Shibahara T."/>
            <person name="Tanaka T."/>
            <person name="Ishii S."/>
            <person name="Yamamoto J."/>
            <person name="Saito K."/>
            <person name="Kawai Y."/>
            <person name="Isono Y."/>
            <person name="Nakamura Y."/>
            <person name="Nagahari K."/>
            <person name="Murakami K."/>
            <person name="Yasuda T."/>
            <person name="Iwayanagi T."/>
            <person name="Wagatsuma M."/>
            <person name="Shiratori A."/>
            <person name="Sudo H."/>
            <person name="Hosoiri T."/>
            <person name="Kaku Y."/>
            <person name="Kodaira H."/>
            <person name="Kondo H."/>
            <person name="Sugawara M."/>
            <person name="Takahashi M."/>
            <person name="Kanda K."/>
            <person name="Yokoi T."/>
            <person name="Furuya T."/>
            <person name="Kikkawa E."/>
            <person name="Omura Y."/>
            <person name="Abe K."/>
            <person name="Kamihara K."/>
            <person name="Katsuta N."/>
            <person name="Sato K."/>
            <person name="Tanikawa M."/>
            <person name="Yamazaki M."/>
            <person name="Ninomiya K."/>
            <person name="Ishibashi T."/>
            <person name="Yamashita H."/>
            <person name="Murakawa K."/>
            <person name="Fujimori K."/>
            <person name="Tanai H."/>
            <person name="Kimata M."/>
            <person name="Watanabe M."/>
            <person name="Hiraoka S."/>
            <person name="Chiba Y."/>
            <person name="Ishida S."/>
            <person name="Ono Y."/>
            <person name="Takiguchi S."/>
            <person name="Watanabe S."/>
            <person name="Yosida M."/>
            <person name="Hotuta T."/>
            <person name="Kusano J."/>
            <person name="Kanehori K."/>
            <person name="Takahashi-Fujii A."/>
            <person name="Hara H."/>
            <person name="Tanase T.-O."/>
            <person name="Nomura Y."/>
            <person name="Togiya S."/>
            <person name="Komai F."/>
            <person name="Hara R."/>
            <person name="Takeuchi K."/>
            <person name="Arita M."/>
            <person name="Imose N."/>
            <person name="Musashino K."/>
            <person name="Yuuki H."/>
            <person name="Oshima A."/>
            <person name="Sasaki N."/>
            <person name="Aotsuka S."/>
            <person name="Yoshikawa Y."/>
            <person name="Matsunawa H."/>
            <person name="Ichihara T."/>
            <person name="Shiohata N."/>
            <person name="Sano S."/>
            <person name="Moriya S."/>
            <person name="Momiyama H."/>
            <person name="Satoh N."/>
            <person name="Takami S."/>
            <person name="Terashima Y."/>
            <person name="Suzuki O."/>
            <person name="Nakagawa S."/>
            <person name="Senoh A."/>
            <person name="Mizoguchi H."/>
            <person name="Goto Y."/>
            <person name="Shimizu F."/>
            <person name="Wakebe H."/>
            <person name="Hishigaki H."/>
            <person name="Watanabe T."/>
            <person name="Sugiyama A."/>
            <person name="Takemoto M."/>
            <person name="Kawakami B."/>
            <person name="Yamazaki M."/>
            <person name="Watanabe K."/>
            <person name="Kumagai A."/>
            <person name="Itakura S."/>
            <person name="Fukuzumi Y."/>
            <person name="Fujimori Y."/>
            <person name="Komiyama M."/>
            <person name="Tashiro H."/>
            <person name="Tanigami A."/>
            <person name="Fujiwara T."/>
            <person name="Ono T."/>
            <person name="Yamada K."/>
            <person name="Fujii Y."/>
            <person name="Ozaki K."/>
            <person name="Hirao M."/>
            <person name="Ohmori Y."/>
            <person name="Kawabata A."/>
            <person name="Hikiji T."/>
            <person name="Kobatake N."/>
            <person name="Inagaki H."/>
            <person name="Ikema Y."/>
            <person name="Okamoto S."/>
            <person name="Okitani R."/>
            <person name="Kawakami T."/>
            <person name="Noguchi S."/>
            <person name="Itoh T."/>
            <person name="Shigeta K."/>
            <person name="Senba T."/>
            <person name="Matsumura K."/>
            <person name="Nakajima Y."/>
            <person name="Mizuno T."/>
            <person name="Morinaga M."/>
            <person name="Sasaki M."/>
            <person name="Togashi T."/>
            <person name="Oyama M."/>
            <person name="Hata H."/>
            <person name="Watanabe M."/>
            <person name="Komatsu T."/>
            <person name="Mizushima-Sugano J."/>
            <person name="Satoh T."/>
            <person name="Shirai Y."/>
            <person name="Takahashi Y."/>
            <person name="Nakagawa K."/>
            <person name="Okumura K."/>
            <person name="Nagase T."/>
            <person name="Nomura N."/>
            <person name="Kikuchi H."/>
            <person name="Masuho Y."/>
            <person name="Yamashita R."/>
            <person name="Nakai K."/>
            <person name="Yada T."/>
            <person name="Nakamura Y."/>
            <person name="Ohara O."/>
            <person name="Isogai T."/>
            <person name="Sugano S."/>
        </authorList>
    </citation>
    <scope>NUCLEOTIDE SEQUENCE [LARGE SCALE MRNA]</scope>
    <source>
        <tissue>Umbilical cord blood</tissue>
    </source>
</reference>
<reference key="5">
    <citation type="journal article" date="2003" name="Nature">
        <title>The DNA sequence and analysis of human chromosome 6.</title>
        <authorList>
            <person name="Mungall A.J."/>
            <person name="Palmer S.A."/>
            <person name="Sims S.K."/>
            <person name="Edwards C.A."/>
            <person name="Ashurst J.L."/>
            <person name="Wilming L."/>
            <person name="Jones M.C."/>
            <person name="Horton R."/>
            <person name="Hunt S.E."/>
            <person name="Scott C.E."/>
            <person name="Gilbert J.G.R."/>
            <person name="Clamp M.E."/>
            <person name="Bethel G."/>
            <person name="Milne S."/>
            <person name="Ainscough R."/>
            <person name="Almeida J.P."/>
            <person name="Ambrose K.D."/>
            <person name="Andrews T.D."/>
            <person name="Ashwell R.I.S."/>
            <person name="Babbage A.K."/>
            <person name="Bagguley C.L."/>
            <person name="Bailey J."/>
            <person name="Banerjee R."/>
            <person name="Barker D.J."/>
            <person name="Barlow K.F."/>
            <person name="Bates K."/>
            <person name="Beare D.M."/>
            <person name="Beasley H."/>
            <person name="Beasley O."/>
            <person name="Bird C.P."/>
            <person name="Blakey S.E."/>
            <person name="Bray-Allen S."/>
            <person name="Brook J."/>
            <person name="Brown A.J."/>
            <person name="Brown J.Y."/>
            <person name="Burford D.C."/>
            <person name="Burrill W."/>
            <person name="Burton J."/>
            <person name="Carder C."/>
            <person name="Carter N.P."/>
            <person name="Chapman J.C."/>
            <person name="Clark S.Y."/>
            <person name="Clark G."/>
            <person name="Clee C.M."/>
            <person name="Clegg S."/>
            <person name="Cobley V."/>
            <person name="Collier R.E."/>
            <person name="Collins J.E."/>
            <person name="Colman L.K."/>
            <person name="Corby N.R."/>
            <person name="Coville G.J."/>
            <person name="Culley K.M."/>
            <person name="Dhami P."/>
            <person name="Davies J."/>
            <person name="Dunn M."/>
            <person name="Earthrowl M.E."/>
            <person name="Ellington A.E."/>
            <person name="Evans K.A."/>
            <person name="Faulkner L."/>
            <person name="Francis M.D."/>
            <person name="Frankish A."/>
            <person name="Frankland J."/>
            <person name="French L."/>
            <person name="Garner P."/>
            <person name="Garnett J."/>
            <person name="Ghori M.J."/>
            <person name="Gilby L.M."/>
            <person name="Gillson C.J."/>
            <person name="Glithero R.J."/>
            <person name="Grafham D.V."/>
            <person name="Grant M."/>
            <person name="Gribble S."/>
            <person name="Griffiths C."/>
            <person name="Griffiths M.N.D."/>
            <person name="Hall R."/>
            <person name="Halls K.S."/>
            <person name="Hammond S."/>
            <person name="Harley J.L."/>
            <person name="Hart E.A."/>
            <person name="Heath P.D."/>
            <person name="Heathcott R."/>
            <person name="Holmes S.J."/>
            <person name="Howden P.J."/>
            <person name="Howe K.L."/>
            <person name="Howell G.R."/>
            <person name="Huckle E."/>
            <person name="Humphray S.J."/>
            <person name="Humphries M.D."/>
            <person name="Hunt A.R."/>
            <person name="Johnson C.M."/>
            <person name="Joy A.A."/>
            <person name="Kay M."/>
            <person name="Keenan S.J."/>
            <person name="Kimberley A.M."/>
            <person name="King A."/>
            <person name="Laird G.K."/>
            <person name="Langford C."/>
            <person name="Lawlor S."/>
            <person name="Leongamornlert D.A."/>
            <person name="Leversha M."/>
            <person name="Lloyd C.R."/>
            <person name="Lloyd D.M."/>
            <person name="Loveland J.E."/>
            <person name="Lovell J."/>
            <person name="Martin S."/>
            <person name="Mashreghi-Mohammadi M."/>
            <person name="Maslen G.L."/>
            <person name="Matthews L."/>
            <person name="McCann O.T."/>
            <person name="McLaren S.J."/>
            <person name="McLay K."/>
            <person name="McMurray A."/>
            <person name="Moore M.J.F."/>
            <person name="Mullikin J.C."/>
            <person name="Niblett D."/>
            <person name="Nickerson T."/>
            <person name="Novik K.L."/>
            <person name="Oliver K."/>
            <person name="Overton-Larty E.K."/>
            <person name="Parker A."/>
            <person name="Patel R."/>
            <person name="Pearce A.V."/>
            <person name="Peck A.I."/>
            <person name="Phillimore B.J.C.T."/>
            <person name="Phillips S."/>
            <person name="Plumb R.W."/>
            <person name="Porter K.M."/>
            <person name="Ramsey Y."/>
            <person name="Ranby S.A."/>
            <person name="Rice C.M."/>
            <person name="Ross M.T."/>
            <person name="Searle S.M."/>
            <person name="Sehra H.K."/>
            <person name="Sheridan E."/>
            <person name="Skuce C.D."/>
            <person name="Smith S."/>
            <person name="Smith M."/>
            <person name="Spraggon L."/>
            <person name="Squares S.L."/>
            <person name="Steward C.A."/>
            <person name="Sycamore N."/>
            <person name="Tamlyn-Hall G."/>
            <person name="Tester J."/>
            <person name="Theaker A.J."/>
            <person name="Thomas D.W."/>
            <person name="Thorpe A."/>
            <person name="Tracey A."/>
            <person name="Tromans A."/>
            <person name="Tubby B."/>
            <person name="Wall M."/>
            <person name="Wallis J.M."/>
            <person name="West A.P."/>
            <person name="White S.S."/>
            <person name="Whitehead S.L."/>
            <person name="Whittaker H."/>
            <person name="Wild A."/>
            <person name="Willey D.J."/>
            <person name="Wilmer T.E."/>
            <person name="Wood J.M."/>
            <person name="Wray P.W."/>
            <person name="Wyatt J.C."/>
            <person name="Young L."/>
            <person name="Younger R.M."/>
            <person name="Bentley D.R."/>
            <person name="Coulson A."/>
            <person name="Durbin R.M."/>
            <person name="Hubbard T."/>
            <person name="Sulston J.E."/>
            <person name="Dunham I."/>
            <person name="Rogers J."/>
            <person name="Beck S."/>
        </authorList>
    </citation>
    <scope>NUCLEOTIDE SEQUENCE [LARGE SCALE GENOMIC DNA]</scope>
</reference>
<reference key="6">
    <citation type="submission" date="2005-07" db="EMBL/GenBank/DDBJ databases">
        <authorList>
            <person name="Mural R.J."/>
            <person name="Istrail S."/>
            <person name="Sutton G."/>
            <person name="Florea L."/>
            <person name="Halpern A.L."/>
            <person name="Mobarry C.M."/>
            <person name="Lippert R."/>
            <person name="Walenz B."/>
            <person name="Shatkay H."/>
            <person name="Dew I."/>
            <person name="Miller J.R."/>
            <person name="Flanigan M.J."/>
            <person name="Edwards N.J."/>
            <person name="Bolanos R."/>
            <person name="Fasulo D."/>
            <person name="Halldorsson B.V."/>
            <person name="Hannenhalli S."/>
            <person name="Turner R."/>
            <person name="Yooseph S."/>
            <person name="Lu F."/>
            <person name="Nusskern D.R."/>
            <person name="Shue B.C."/>
            <person name="Zheng X.H."/>
            <person name="Zhong F."/>
            <person name="Delcher A.L."/>
            <person name="Huson D.H."/>
            <person name="Kravitz S.A."/>
            <person name="Mouchard L."/>
            <person name="Reinert K."/>
            <person name="Remington K.A."/>
            <person name="Clark A.G."/>
            <person name="Waterman M.S."/>
            <person name="Eichler E.E."/>
            <person name="Adams M.D."/>
            <person name="Hunkapiller M.W."/>
            <person name="Myers E.W."/>
            <person name="Venter J.C."/>
        </authorList>
    </citation>
    <scope>NUCLEOTIDE SEQUENCE [LARGE SCALE GENOMIC DNA]</scope>
</reference>
<reference key="7">
    <citation type="journal article" date="2004" name="Genome Res.">
        <title>The status, quality, and expansion of the NIH full-length cDNA project: the Mammalian Gene Collection (MGC).</title>
        <authorList>
            <consortium name="The MGC Project Team"/>
        </authorList>
    </citation>
    <scope>NUCLEOTIDE SEQUENCE [LARGE SCALE MRNA]</scope>
    <source>
        <tissue>B-cell</tissue>
    </source>
</reference>
<reference key="8">
    <citation type="journal article" date="2004" name="Biochem. J.">
        <title>Guanine nucleotide dissociation inhibitor activity of the triple GoLoco motif protein G18: alanine-to-aspartate mutation restores function to an inactive second GoLoco motif.</title>
        <authorList>
            <person name="Kimple R.J."/>
            <person name="Willard F.S."/>
            <person name="Hains M.D."/>
            <person name="Jones M.B."/>
            <person name="Nweke G.K."/>
            <person name="Siderovski D.P."/>
        </authorList>
    </citation>
    <scope>FUNCTION</scope>
    <scope>MUTAGENESIS OF ALA-121</scope>
    <scope>DOMAIN</scope>
</reference>
<reference key="9">
    <citation type="journal article" date="2009" name="Sci. Signal.">
        <title>Quantitative phosphoproteomic analysis of T cell receptor signaling reveals system-wide modulation of protein-protein interactions.</title>
        <authorList>
            <person name="Mayya V."/>
            <person name="Lundgren D.H."/>
            <person name="Hwang S.-I."/>
            <person name="Rezaul K."/>
            <person name="Wu L."/>
            <person name="Eng J.K."/>
            <person name="Rodionov V."/>
            <person name="Han D.K."/>
        </authorList>
    </citation>
    <scope>IDENTIFICATION BY MASS SPECTROMETRY [LARGE SCALE ANALYSIS]</scope>
    <source>
        <tissue>Leukemic T-cell</tissue>
    </source>
</reference>
<reference key="10">
    <citation type="journal article" date="2013" name="J. Proteome Res.">
        <title>Toward a comprehensive characterization of a human cancer cell phosphoproteome.</title>
        <authorList>
            <person name="Zhou H."/>
            <person name="Di Palma S."/>
            <person name="Preisinger C."/>
            <person name="Peng M."/>
            <person name="Polat A.N."/>
            <person name="Heck A.J."/>
            <person name="Mohammed S."/>
        </authorList>
    </citation>
    <scope>PHOSPHORYLATION [LARGE SCALE ANALYSIS] AT SER-35 AND SER-39</scope>
    <scope>IDENTIFICATION BY MASS SPECTROMETRY [LARGE SCALE ANALYSIS]</scope>
    <source>
        <tissue>Erythroleukemia</tissue>
    </source>
</reference>
<reference key="11">
    <citation type="journal article" date="2014" name="J. Proteomics">
        <title>An enzyme assisted RP-RPLC approach for in-depth analysis of human liver phosphoproteome.</title>
        <authorList>
            <person name="Bian Y."/>
            <person name="Song C."/>
            <person name="Cheng K."/>
            <person name="Dong M."/>
            <person name="Wang F."/>
            <person name="Huang J."/>
            <person name="Sun D."/>
            <person name="Wang L."/>
            <person name="Ye M."/>
            <person name="Zou H."/>
        </authorList>
    </citation>
    <scope>PHOSPHORYLATION [LARGE SCALE ANALYSIS] AT SER-35; SER-39; SER-59 AND THR-62</scope>
    <scope>IDENTIFICATION BY MASS SPECTROMETRY [LARGE SCALE ANALYSIS]</scope>
    <source>
        <tissue>Liver</tissue>
    </source>
</reference>
<dbReference type="EMBL" id="AJ243937">
    <property type="protein sequence ID" value="CAB51288.1"/>
    <property type="molecule type" value="mRNA"/>
</dbReference>
<dbReference type="EMBL" id="AF155657">
    <property type="protein sequence ID" value="AAF67476.1"/>
    <property type="molecule type" value="mRNA"/>
</dbReference>
<dbReference type="EMBL" id="AK313922">
    <property type="protein sequence ID" value="BAG36643.1"/>
    <property type="molecule type" value="mRNA"/>
</dbReference>
<dbReference type="EMBL" id="AL662830">
    <property type="status" value="NOT_ANNOTATED_CDS"/>
    <property type="molecule type" value="Genomic_DNA"/>
</dbReference>
<dbReference type="EMBL" id="AL662884">
    <property type="status" value="NOT_ANNOTATED_CDS"/>
    <property type="molecule type" value="Genomic_DNA"/>
</dbReference>
<dbReference type="EMBL" id="AL845464">
    <property type="status" value="NOT_ANNOTATED_CDS"/>
    <property type="molecule type" value="Genomic_DNA"/>
</dbReference>
<dbReference type="EMBL" id="BX284686">
    <property type="status" value="NOT_ANNOTATED_CDS"/>
    <property type="molecule type" value="Genomic_DNA"/>
</dbReference>
<dbReference type="EMBL" id="BX927239">
    <property type="status" value="NOT_ANNOTATED_CDS"/>
    <property type="molecule type" value="Genomic_DNA"/>
</dbReference>
<dbReference type="EMBL" id="CR933878">
    <property type="status" value="NOT_ANNOTATED_CDS"/>
    <property type="molecule type" value="Genomic_DNA"/>
</dbReference>
<dbReference type="EMBL" id="CR812478">
    <property type="status" value="NOT_ANNOTATED_CDS"/>
    <property type="molecule type" value="Genomic_DNA"/>
</dbReference>
<dbReference type="EMBL" id="CH471081">
    <property type="protein sequence ID" value="EAX03620.1"/>
    <property type="molecule type" value="Genomic_DNA"/>
</dbReference>
<dbReference type="EMBL" id="BC018724">
    <property type="protein sequence ID" value="AAH18724.1"/>
    <property type="molecule type" value="mRNA"/>
</dbReference>
<dbReference type="CCDS" id="CCDS34419.1"/>
<dbReference type="RefSeq" id="NP_001263430.1">
    <property type="nucleotide sequence ID" value="NM_001276501.2"/>
</dbReference>
<dbReference type="RefSeq" id="NP_071390.1">
    <property type="nucleotide sequence ID" value="NM_022107.3"/>
</dbReference>
<dbReference type="BioGRID" id="122005">
    <property type="interactions" value="85"/>
</dbReference>
<dbReference type="FunCoup" id="Q9Y4H4">
    <property type="interactions" value="191"/>
</dbReference>
<dbReference type="IntAct" id="Q9Y4H4">
    <property type="interactions" value="87"/>
</dbReference>
<dbReference type="STRING" id="9606.ENSP00000364183"/>
<dbReference type="iPTMnet" id="Q9Y4H4"/>
<dbReference type="PhosphoSitePlus" id="Q9Y4H4"/>
<dbReference type="BioMuta" id="GPSM3"/>
<dbReference type="DMDM" id="74753502"/>
<dbReference type="MassIVE" id="Q9Y4H4"/>
<dbReference type="PaxDb" id="9606-ENSP00000364180"/>
<dbReference type="PeptideAtlas" id="Q9Y4H4"/>
<dbReference type="ProteomicsDB" id="86206"/>
<dbReference type="Antibodypedia" id="28524">
    <property type="antibodies" value="63 antibodies from 17 providers"/>
</dbReference>
<dbReference type="DNASU" id="63940"/>
<dbReference type="Ensembl" id="ENST00000375040.8">
    <property type="protein sequence ID" value="ENSP00000364180.3"/>
    <property type="gene ID" value="ENSG00000213654.10"/>
</dbReference>
<dbReference type="Ensembl" id="ENST00000375043.3">
    <property type="protein sequence ID" value="ENSP00000364183.3"/>
    <property type="gene ID" value="ENSG00000213654.10"/>
</dbReference>
<dbReference type="Ensembl" id="ENST00000383265.8">
    <property type="protein sequence ID" value="ENSP00000372752.4"/>
    <property type="gene ID" value="ENSG00000206314.9"/>
</dbReference>
<dbReference type="Ensembl" id="ENST00000383269.2">
    <property type="protein sequence ID" value="ENSP00000372756.2"/>
    <property type="gene ID" value="ENSG00000206314.9"/>
</dbReference>
<dbReference type="Ensembl" id="ENST00000414839.6">
    <property type="protein sequence ID" value="ENSP00000405026.2"/>
    <property type="gene ID" value="ENSG00000236697.7"/>
</dbReference>
<dbReference type="Ensembl" id="ENST00000420041.1">
    <property type="protein sequence ID" value="ENSP00000413975.1"/>
    <property type="gene ID" value="ENSG00000233490.7"/>
</dbReference>
<dbReference type="Ensembl" id="ENST00000424520.6">
    <property type="protein sequence ID" value="ENSP00000413430.2"/>
    <property type="gene ID" value="ENSG00000237052.7"/>
</dbReference>
<dbReference type="Ensembl" id="ENST00000429209.6">
    <property type="protein sequence ID" value="ENSP00000392487.2"/>
    <property type="gene ID" value="ENSG00000234243.7"/>
</dbReference>
<dbReference type="Ensembl" id="ENST00000432871.6">
    <property type="protein sequence ID" value="ENSP00000414939.2"/>
    <property type="gene ID" value="ENSG00000234508.7"/>
</dbReference>
<dbReference type="Ensembl" id="ENST00000441705.1">
    <property type="protein sequence ID" value="ENSP00000396786.1"/>
    <property type="gene ID" value="ENSG00000234243.7"/>
</dbReference>
<dbReference type="Ensembl" id="ENST00000445326.1">
    <property type="protein sequence ID" value="ENSP00000407538.1"/>
    <property type="gene ID" value="ENSG00000234508.7"/>
</dbReference>
<dbReference type="Ensembl" id="ENST00000448684.1">
    <property type="protein sequence ID" value="ENSP00000403132.1"/>
    <property type="gene ID" value="ENSG00000236697.7"/>
</dbReference>
<dbReference type="Ensembl" id="ENST00000453667.6">
    <property type="protein sequence ID" value="ENSP00000414024.2"/>
    <property type="gene ID" value="ENSG00000233490.7"/>
</dbReference>
<dbReference type="Ensembl" id="ENST00000457070.1">
    <property type="protein sequence ID" value="ENSP00000410087.1"/>
    <property type="gene ID" value="ENSG00000237052.7"/>
</dbReference>
<dbReference type="GeneID" id="63940"/>
<dbReference type="KEGG" id="hsa:63940"/>
<dbReference type="MANE-Select" id="ENST00000375040.8">
    <property type="protein sequence ID" value="ENSP00000364180.3"/>
    <property type="RefSeq nucleotide sequence ID" value="NM_001276501.2"/>
    <property type="RefSeq protein sequence ID" value="NP_001263430.1"/>
</dbReference>
<dbReference type="UCSC" id="uc003oay.5">
    <property type="organism name" value="human"/>
</dbReference>
<dbReference type="AGR" id="HGNC:13945"/>
<dbReference type="CTD" id="63940"/>
<dbReference type="DisGeNET" id="63940"/>
<dbReference type="GeneCards" id="GPSM3"/>
<dbReference type="HGNC" id="HGNC:13945">
    <property type="gene designation" value="GPSM3"/>
</dbReference>
<dbReference type="HPA" id="ENSG00000213654">
    <property type="expression patterns" value="Group enriched (bone marrow, intestine, lung, lymphoid tissue)"/>
</dbReference>
<dbReference type="MIM" id="618558">
    <property type="type" value="gene"/>
</dbReference>
<dbReference type="neXtProt" id="NX_Q9Y4H4"/>
<dbReference type="OpenTargets" id="ENSG00000213654"/>
<dbReference type="PharmGKB" id="PA25940"/>
<dbReference type="VEuPathDB" id="HostDB:ENSG00000213654"/>
<dbReference type="eggNOG" id="ENOG502STIS">
    <property type="taxonomic scope" value="Eukaryota"/>
</dbReference>
<dbReference type="GeneTree" id="ENSGT00390000002471"/>
<dbReference type="HOGENOM" id="CLU_139851_0_0_1"/>
<dbReference type="InParanoid" id="Q9Y4H4"/>
<dbReference type="OMA" id="HQSQRME"/>
<dbReference type="PAN-GO" id="Q9Y4H4">
    <property type="GO annotations" value="1 GO annotation based on evolutionary models"/>
</dbReference>
<dbReference type="PhylomeDB" id="Q9Y4H4"/>
<dbReference type="TreeFam" id="TF339136"/>
<dbReference type="PathwayCommons" id="Q9Y4H4"/>
<dbReference type="Reactome" id="R-HSA-418594">
    <property type="pathway name" value="G alpha (i) signalling events"/>
</dbReference>
<dbReference type="SignaLink" id="Q9Y4H4"/>
<dbReference type="SIGNOR" id="Q9Y4H4"/>
<dbReference type="BioGRID-ORCS" id="63940">
    <property type="hits" value="19 hits in 1148 CRISPR screens"/>
</dbReference>
<dbReference type="GenomeRNAi" id="63940"/>
<dbReference type="Pharos" id="Q9Y4H4">
    <property type="development level" value="Tbio"/>
</dbReference>
<dbReference type="PRO" id="PR:Q9Y4H4"/>
<dbReference type="Proteomes" id="UP000005640">
    <property type="component" value="Chromosome 6"/>
</dbReference>
<dbReference type="RNAct" id="Q9Y4H4">
    <property type="molecule type" value="protein"/>
</dbReference>
<dbReference type="Bgee" id="ENSG00000213654">
    <property type="expression patterns" value="Expressed in granulocyte and 96 other cell types or tissues"/>
</dbReference>
<dbReference type="ExpressionAtlas" id="Q9Y4H4">
    <property type="expression patterns" value="baseline and differential"/>
</dbReference>
<dbReference type="GO" id="GO:0005737">
    <property type="term" value="C:cytoplasm"/>
    <property type="evidence" value="ECO:0007669"/>
    <property type="project" value="UniProtKB-SubCell"/>
</dbReference>
<dbReference type="GO" id="GO:0005886">
    <property type="term" value="C:plasma membrane"/>
    <property type="evidence" value="ECO:0007669"/>
    <property type="project" value="Ensembl"/>
</dbReference>
<dbReference type="GO" id="GO:0030695">
    <property type="term" value="F:GTPase regulator activity"/>
    <property type="evidence" value="ECO:0007669"/>
    <property type="project" value="InterPro"/>
</dbReference>
<dbReference type="GO" id="GO:1900017">
    <property type="term" value="P:positive regulation of cytokine production involved in inflammatory response"/>
    <property type="evidence" value="ECO:0007669"/>
    <property type="project" value="Ensembl"/>
</dbReference>
<dbReference type="GO" id="GO:0050729">
    <property type="term" value="P:positive regulation of inflammatory response"/>
    <property type="evidence" value="ECO:0000318"/>
    <property type="project" value="GO_Central"/>
</dbReference>
<dbReference type="GO" id="GO:0002690">
    <property type="term" value="P:positive regulation of leukocyte chemotaxis"/>
    <property type="evidence" value="ECO:0007669"/>
    <property type="project" value="Ensembl"/>
</dbReference>
<dbReference type="FunFam" id="1.25.40.10:FF:000241">
    <property type="entry name" value="G-protein-signaling modulator 3 isoform X1"/>
    <property type="match status" value="1"/>
</dbReference>
<dbReference type="Gene3D" id="1.25.40.10">
    <property type="entry name" value="Tetratricopeptide repeat domain"/>
    <property type="match status" value="1"/>
</dbReference>
<dbReference type="InterPro" id="IPR003109">
    <property type="entry name" value="GoLoco_motif"/>
</dbReference>
<dbReference type="InterPro" id="IPR042888">
    <property type="entry name" value="GPSM3"/>
</dbReference>
<dbReference type="InterPro" id="IPR011990">
    <property type="entry name" value="TPR-like_helical_dom_sf"/>
</dbReference>
<dbReference type="PANTHER" id="PTHR47617">
    <property type="entry name" value="G-PROTEIN SIGNALING MODULATOR 3"/>
    <property type="match status" value="1"/>
</dbReference>
<dbReference type="PANTHER" id="PTHR47617:SF1">
    <property type="entry name" value="G-PROTEIN-SIGNALING MODULATOR 3"/>
    <property type="match status" value="1"/>
</dbReference>
<dbReference type="Pfam" id="PF02188">
    <property type="entry name" value="GoLoco"/>
    <property type="match status" value="2"/>
</dbReference>
<dbReference type="SMART" id="SM00390">
    <property type="entry name" value="GoLoco"/>
    <property type="match status" value="3"/>
</dbReference>
<dbReference type="PROSITE" id="PS50877">
    <property type="entry name" value="GOLOCO"/>
    <property type="match status" value="2"/>
</dbReference>
<organism>
    <name type="scientific">Homo sapiens</name>
    <name type="common">Human</name>
    <dbReference type="NCBI Taxonomy" id="9606"/>
    <lineage>
        <taxon>Eukaryota</taxon>
        <taxon>Metazoa</taxon>
        <taxon>Chordata</taxon>
        <taxon>Craniata</taxon>
        <taxon>Vertebrata</taxon>
        <taxon>Euteleostomi</taxon>
        <taxon>Mammalia</taxon>
        <taxon>Eutheria</taxon>
        <taxon>Euarchontoglires</taxon>
        <taxon>Primates</taxon>
        <taxon>Haplorrhini</taxon>
        <taxon>Catarrhini</taxon>
        <taxon>Hominidae</taxon>
        <taxon>Homo</taxon>
    </lineage>
</organism>